<protein>
    <recommendedName>
        <fullName evidence="1">Signal recognition particle 19 kDa protein</fullName>
        <shortName evidence="1">SRP19</shortName>
    </recommendedName>
</protein>
<accession>Q58440</accession>
<gene>
    <name evidence="1" type="primary">srp19</name>
    <name type="ordered locus">MJ1034</name>
</gene>
<comment type="function">
    <text evidence="1">Involved in targeting and insertion of nascent membrane proteins into the cytoplasmic membrane. Binds directly to 7S RNA and mediates binding of the 54 kDa subunit of the SRP.</text>
</comment>
<comment type="subunit">
    <text evidence="1">Part of the signal recognition particle protein translocation system, which is composed of SRP and FtsY. Archaeal SRP consists of a 7S RNA molecule of 300 nucleotides and two protein subunits: SRP54 and SRP19.</text>
</comment>
<comment type="subcellular location">
    <subcellularLocation>
        <location evidence="1">Cytoplasm</location>
    </subcellularLocation>
</comment>
<comment type="similarity">
    <text evidence="1">Belongs to the SRP19 family.</text>
</comment>
<evidence type="ECO:0000255" key="1">
    <source>
        <dbReference type="HAMAP-Rule" id="MF_00305"/>
    </source>
</evidence>
<evidence type="ECO:0007829" key="2">
    <source>
        <dbReference type="PDB" id="1LNG"/>
    </source>
</evidence>
<evidence type="ECO:0007829" key="3">
    <source>
        <dbReference type="PDB" id="3NDB"/>
    </source>
</evidence>
<keyword id="KW-0002">3D-structure</keyword>
<keyword id="KW-0963">Cytoplasm</keyword>
<keyword id="KW-1185">Reference proteome</keyword>
<keyword id="KW-0687">Ribonucleoprotein</keyword>
<keyword id="KW-0694">RNA-binding</keyword>
<keyword id="KW-0733">Signal recognition particle</keyword>
<dbReference type="EMBL" id="L77117">
    <property type="protein sequence ID" value="AAB99038.1"/>
    <property type="molecule type" value="Genomic_DNA"/>
</dbReference>
<dbReference type="PIR" id="A64429">
    <property type="entry name" value="A64429"/>
</dbReference>
<dbReference type="RefSeq" id="WP_010870547.1">
    <property type="nucleotide sequence ID" value="NC_000909.1"/>
</dbReference>
<dbReference type="PDB" id="1L9A">
    <property type="method" value="X-ray"/>
    <property type="resolution" value="2.90 A"/>
    <property type="chains" value="A=1-87"/>
</dbReference>
<dbReference type="PDB" id="1LNG">
    <property type="method" value="X-ray"/>
    <property type="resolution" value="2.30 A"/>
    <property type="chains" value="A=1-87"/>
</dbReference>
<dbReference type="PDB" id="2V3C">
    <property type="method" value="X-ray"/>
    <property type="resolution" value="2.50 A"/>
    <property type="chains" value="A/B=1-87"/>
</dbReference>
<dbReference type="PDB" id="3NDB">
    <property type="method" value="X-ray"/>
    <property type="resolution" value="3.00 A"/>
    <property type="chains" value="A=1-87"/>
</dbReference>
<dbReference type="PDB" id="4XCO">
    <property type="method" value="X-ray"/>
    <property type="resolution" value="2.90 A"/>
    <property type="chains" value="A/B=1-87"/>
</dbReference>
<dbReference type="PDBsum" id="1L9A"/>
<dbReference type="PDBsum" id="1LNG"/>
<dbReference type="PDBsum" id="2V3C"/>
<dbReference type="PDBsum" id="3NDB"/>
<dbReference type="PDBsum" id="4XCO"/>
<dbReference type="SMR" id="Q58440"/>
<dbReference type="DIP" id="DIP-46443N"/>
<dbReference type="FunCoup" id="Q58440">
    <property type="interactions" value="57"/>
</dbReference>
<dbReference type="IntAct" id="Q58440">
    <property type="interactions" value="1"/>
</dbReference>
<dbReference type="STRING" id="243232.MJ_1034"/>
<dbReference type="PaxDb" id="243232-MJ_1034"/>
<dbReference type="EnsemblBacteria" id="AAB99038">
    <property type="protein sequence ID" value="AAB99038"/>
    <property type="gene ID" value="MJ_1034"/>
</dbReference>
<dbReference type="GeneID" id="1451931"/>
<dbReference type="KEGG" id="mja:MJ_1034"/>
<dbReference type="eggNOG" id="arCOG01217">
    <property type="taxonomic scope" value="Archaea"/>
</dbReference>
<dbReference type="HOGENOM" id="CLU_169299_1_0_2"/>
<dbReference type="InParanoid" id="Q58440"/>
<dbReference type="OrthoDB" id="56356at2157"/>
<dbReference type="PhylomeDB" id="Q58440"/>
<dbReference type="EvolutionaryTrace" id="Q58440"/>
<dbReference type="Proteomes" id="UP000000805">
    <property type="component" value="Chromosome"/>
</dbReference>
<dbReference type="GO" id="GO:0048500">
    <property type="term" value="C:signal recognition particle"/>
    <property type="evidence" value="ECO:0007669"/>
    <property type="project" value="UniProtKB-UniRule"/>
</dbReference>
<dbReference type="GO" id="GO:0008312">
    <property type="term" value="F:7S RNA binding"/>
    <property type="evidence" value="ECO:0007669"/>
    <property type="project" value="UniProtKB-UniRule"/>
</dbReference>
<dbReference type="GO" id="GO:0006614">
    <property type="term" value="P:SRP-dependent cotranslational protein targeting to membrane"/>
    <property type="evidence" value="ECO:0007669"/>
    <property type="project" value="InterPro"/>
</dbReference>
<dbReference type="Gene3D" id="3.30.56.30">
    <property type="entry name" value="Signal recognition particle, SRP19-like subunit"/>
    <property type="match status" value="1"/>
</dbReference>
<dbReference type="HAMAP" id="MF_00305">
    <property type="entry name" value="SRP19"/>
    <property type="match status" value="1"/>
</dbReference>
<dbReference type="InterPro" id="IPR002778">
    <property type="entry name" value="Signal_recog_particle_SRP19"/>
</dbReference>
<dbReference type="InterPro" id="IPR036521">
    <property type="entry name" value="SRP19-like_sf"/>
</dbReference>
<dbReference type="InterPro" id="IPR022938">
    <property type="entry name" value="SRP19_arc-type"/>
</dbReference>
<dbReference type="PANTHER" id="PTHR17453">
    <property type="entry name" value="SIGNAL RECOGNITION PARTICLE 19 KD PROTEIN"/>
    <property type="match status" value="1"/>
</dbReference>
<dbReference type="PANTHER" id="PTHR17453:SF0">
    <property type="entry name" value="SIGNAL RECOGNITION PARTICLE 19 KDA PROTEIN"/>
    <property type="match status" value="1"/>
</dbReference>
<dbReference type="Pfam" id="PF01922">
    <property type="entry name" value="SRP19"/>
    <property type="match status" value="1"/>
</dbReference>
<dbReference type="SUPFAM" id="SSF69695">
    <property type="entry name" value="SRP19"/>
    <property type="match status" value="1"/>
</dbReference>
<sequence length="87" mass="10352">MIIWPSYIDKKKSRREGRKVPEELAIEKPSLKDIEKALKKLGLEPKIYRDKRYPRQHWEICGCVEVDYKGNKLQLLKEICKIIKGKN</sequence>
<proteinExistence type="evidence at protein level"/>
<organism>
    <name type="scientific">Methanocaldococcus jannaschii (strain ATCC 43067 / DSM 2661 / JAL-1 / JCM 10045 / NBRC 100440)</name>
    <name type="common">Methanococcus jannaschii</name>
    <dbReference type="NCBI Taxonomy" id="243232"/>
    <lineage>
        <taxon>Archaea</taxon>
        <taxon>Methanobacteriati</taxon>
        <taxon>Methanobacteriota</taxon>
        <taxon>Methanomada group</taxon>
        <taxon>Methanococci</taxon>
        <taxon>Methanococcales</taxon>
        <taxon>Methanocaldococcaceae</taxon>
        <taxon>Methanocaldococcus</taxon>
    </lineage>
</organism>
<feature type="chain" id="PRO_0000135217" description="Signal recognition particle 19 kDa protein">
    <location>
        <begin position="1"/>
        <end position="87"/>
    </location>
</feature>
<feature type="helix" evidence="2">
    <location>
        <begin position="5"/>
        <end position="7"/>
    </location>
</feature>
<feature type="strand" evidence="3">
    <location>
        <begin position="9"/>
        <end position="12"/>
    </location>
</feature>
<feature type="turn" evidence="2">
    <location>
        <begin position="14"/>
        <end position="17"/>
    </location>
</feature>
<feature type="turn" evidence="2">
    <location>
        <begin position="22"/>
        <end position="24"/>
    </location>
</feature>
<feature type="strand" evidence="2">
    <location>
        <begin position="26"/>
        <end position="28"/>
    </location>
</feature>
<feature type="helix" evidence="2">
    <location>
        <begin position="31"/>
        <end position="40"/>
    </location>
</feature>
<feature type="strand" evidence="2">
    <location>
        <begin position="46"/>
        <end position="48"/>
    </location>
</feature>
<feature type="helix" evidence="2">
    <location>
        <begin position="54"/>
        <end position="56"/>
    </location>
</feature>
<feature type="strand" evidence="2">
    <location>
        <begin position="63"/>
        <end position="65"/>
    </location>
</feature>
<feature type="helix" evidence="2">
    <location>
        <begin position="72"/>
        <end position="83"/>
    </location>
</feature>
<name>SRP19_METJA</name>
<reference key="1">
    <citation type="journal article" date="1996" name="Science">
        <title>Complete genome sequence of the methanogenic archaeon, Methanococcus jannaschii.</title>
        <authorList>
            <person name="Bult C.J."/>
            <person name="White O."/>
            <person name="Olsen G.J."/>
            <person name="Zhou L."/>
            <person name="Fleischmann R.D."/>
            <person name="Sutton G.G."/>
            <person name="Blake J.A."/>
            <person name="FitzGerald L.M."/>
            <person name="Clayton R.A."/>
            <person name="Gocayne J.D."/>
            <person name="Kerlavage A.R."/>
            <person name="Dougherty B.A."/>
            <person name="Tomb J.-F."/>
            <person name="Adams M.D."/>
            <person name="Reich C.I."/>
            <person name="Overbeek R."/>
            <person name="Kirkness E.F."/>
            <person name="Weinstock K.G."/>
            <person name="Merrick J.M."/>
            <person name="Glodek A."/>
            <person name="Scott J.L."/>
            <person name="Geoghagen N.S.M."/>
            <person name="Weidman J.F."/>
            <person name="Fuhrmann J.L."/>
            <person name="Nguyen D."/>
            <person name="Utterback T.R."/>
            <person name="Kelley J.M."/>
            <person name="Peterson J.D."/>
            <person name="Sadow P.W."/>
            <person name="Hanna M.C."/>
            <person name="Cotton M.D."/>
            <person name="Roberts K.M."/>
            <person name="Hurst M.A."/>
            <person name="Kaine B.P."/>
            <person name="Borodovsky M."/>
            <person name="Klenk H.-P."/>
            <person name="Fraser C.M."/>
            <person name="Smith H.O."/>
            <person name="Woese C.R."/>
            <person name="Venter J.C."/>
        </authorList>
    </citation>
    <scope>NUCLEOTIDE SEQUENCE [LARGE SCALE GENOMIC DNA]</scope>
    <source>
        <strain>ATCC 43067 / DSM 2661 / JAL-1 / JCM 10045 / NBRC 100440</strain>
    </source>
</reference>